<comment type="function">
    <text evidence="1">Catalyzes the transfer of the phosphoribosyl group of 5-phosphorylribose-1-pyrophosphate (PRPP) to anthranilate to yield N-(5'-phosphoribosyl)-anthranilate (PRA).</text>
</comment>
<comment type="catalytic activity">
    <reaction evidence="1">
        <text>N-(5-phospho-beta-D-ribosyl)anthranilate + diphosphate = 5-phospho-alpha-D-ribose 1-diphosphate + anthranilate</text>
        <dbReference type="Rhea" id="RHEA:11768"/>
        <dbReference type="ChEBI" id="CHEBI:16567"/>
        <dbReference type="ChEBI" id="CHEBI:18277"/>
        <dbReference type="ChEBI" id="CHEBI:33019"/>
        <dbReference type="ChEBI" id="CHEBI:58017"/>
        <dbReference type="EC" id="2.4.2.18"/>
    </reaction>
</comment>
<comment type="cofactor">
    <cofactor evidence="1">
        <name>Mg(2+)</name>
        <dbReference type="ChEBI" id="CHEBI:18420"/>
    </cofactor>
    <text evidence="1">Binds 2 magnesium ions per monomer.</text>
</comment>
<comment type="pathway">
    <text evidence="1">Amino-acid biosynthesis; L-tryptophan biosynthesis; L-tryptophan from chorismate: step 2/5.</text>
</comment>
<comment type="subunit">
    <text evidence="1">Homodimer.</text>
</comment>
<comment type="similarity">
    <text evidence="1">Belongs to the anthranilate phosphoribosyltransferase family.</text>
</comment>
<feature type="chain" id="PRO_0000325441" description="Anthranilate phosphoribosyltransferase">
    <location>
        <begin position="1"/>
        <end position="364"/>
    </location>
</feature>
<feature type="binding site" evidence="1">
    <location>
        <position position="101"/>
    </location>
    <ligand>
        <name>5-phospho-alpha-D-ribose 1-diphosphate</name>
        <dbReference type="ChEBI" id="CHEBI:58017"/>
    </ligand>
</feature>
<feature type="binding site" evidence="1">
    <location>
        <position position="101"/>
    </location>
    <ligand>
        <name>anthranilate</name>
        <dbReference type="ChEBI" id="CHEBI:16567"/>
        <label>1</label>
    </ligand>
</feature>
<feature type="binding site" evidence="1">
    <location>
        <begin position="104"/>
        <end position="105"/>
    </location>
    <ligand>
        <name>5-phospho-alpha-D-ribose 1-diphosphate</name>
        <dbReference type="ChEBI" id="CHEBI:58017"/>
    </ligand>
</feature>
<feature type="binding site" evidence="1">
    <location>
        <position position="109"/>
    </location>
    <ligand>
        <name>5-phospho-alpha-D-ribose 1-diphosphate</name>
        <dbReference type="ChEBI" id="CHEBI:58017"/>
    </ligand>
</feature>
<feature type="binding site" evidence="1">
    <location>
        <begin position="111"/>
        <end position="114"/>
    </location>
    <ligand>
        <name>5-phospho-alpha-D-ribose 1-diphosphate</name>
        <dbReference type="ChEBI" id="CHEBI:58017"/>
    </ligand>
</feature>
<feature type="binding site" evidence="1">
    <location>
        <position position="113"/>
    </location>
    <ligand>
        <name>Mg(2+)</name>
        <dbReference type="ChEBI" id="CHEBI:18420"/>
        <label>1</label>
    </ligand>
</feature>
<feature type="binding site" evidence="1">
    <location>
        <begin position="129"/>
        <end position="137"/>
    </location>
    <ligand>
        <name>5-phospho-alpha-D-ribose 1-diphosphate</name>
        <dbReference type="ChEBI" id="CHEBI:58017"/>
    </ligand>
</feature>
<feature type="binding site" evidence="1">
    <location>
        <position position="132"/>
    </location>
    <ligand>
        <name>anthranilate</name>
        <dbReference type="ChEBI" id="CHEBI:16567"/>
        <label>1</label>
    </ligand>
</feature>
<feature type="binding site" evidence="1">
    <location>
        <position position="141"/>
    </location>
    <ligand>
        <name>5-phospho-alpha-D-ribose 1-diphosphate</name>
        <dbReference type="ChEBI" id="CHEBI:58017"/>
    </ligand>
</feature>
<feature type="binding site" evidence="1">
    <location>
        <position position="187"/>
    </location>
    <ligand>
        <name>anthranilate</name>
        <dbReference type="ChEBI" id="CHEBI:16567"/>
        <label>2</label>
    </ligand>
</feature>
<feature type="binding site" evidence="1">
    <location>
        <position position="245"/>
    </location>
    <ligand>
        <name>Mg(2+)</name>
        <dbReference type="ChEBI" id="CHEBI:18420"/>
        <label>2</label>
    </ligand>
</feature>
<feature type="binding site" evidence="1">
    <location>
        <position position="246"/>
    </location>
    <ligand>
        <name>Mg(2+)</name>
        <dbReference type="ChEBI" id="CHEBI:18420"/>
        <label>1</label>
    </ligand>
</feature>
<feature type="binding site" evidence="1">
    <location>
        <position position="246"/>
    </location>
    <ligand>
        <name>Mg(2+)</name>
        <dbReference type="ChEBI" id="CHEBI:18420"/>
        <label>2</label>
    </ligand>
</feature>
<sequence>MTTPPPQLASAQNPSGDTPTWAMILGRLTTGQGLAPGQTAWAMDQIMTGTATPAQIAAFAVSMKMKRPTSAEVTELADIMLKHARRVPTDVIGTATVDIVGTGGDGANTVNLSTMAAIVVAAAGVPVVKHGNRAASSLSGGADTLEALGLRIDLGPDEVARCVAEVGIGFAFAPQFHPSYRHAGAVRREIGVPTVFNLLGPLTNPASPRAGLIGCAWADLAEVMAGVFATRGSSVLVVHGDDGLDELTTTTTSTIWRVQAGTVERLTFDPAAFGFARAHVSELTGGDAESNAASARAVLGGAKGPVRDAVVLNAAGALVAHAGLSSDAKWVPAWESGLARAKDAIDSGAAEQLLARWVRFTQQL</sequence>
<evidence type="ECO:0000255" key="1">
    <source>
        <dbReference type="HAMAP-Rule" id="MF_00211"/>
    </source>
</evidence>
<organism>
    <name type="scientific">Mycolicibacterium vanbaalenii (strain DSM 7251 / JCM 13017 / BCRC 16820 / KCTC 9966 / NRRL B-24157 / PYR-1)</name>
    <name type="common">Mycobacterium vanbaalenii</name>
    <dbReference type="NCBI Taxonomy" id="350058"/>
    <lineage>
        <taxon>Bacteria</taxon>
        <taxon>Bacillati</taxon>
        <taxon>Actinomycetota</taxon>
        <taxon>Actinomycetes</taxon>
        <taxon>Mycobacteriales</taxon>
        <taxon>Mycobacteriaceae</taxon>
        <taxon>Mycolicibacterium</taxon>
    </lineage>
</organism>
<reference key="1">
    <citation type="submission" date="2006-12" db="EMBL/GenBank/DDBJ databases">
        <title>Complete sequence of Mycobacterium vanbaalenii PYR-1.</title>
        <authorList>
            <consortium name="US DOE Joint Genome Institute"/>
            <person name="Copeland A."/>
            <person name="Lucas S."/>
            <person name="Lapidus A."/>
            <person name="Barry K."/>
            <person name="Detter J.C."/>
            <person name="Glavina del Rio T."/>
            <person name="Hammon N."/>
            <person name="Israni S."/>
            <person name="Dalin E."/>
            <person name="Tice H."/>
            <person name="Pitluck S."/>
            <person name="Singan V."/>
            <person name="Schmutz J."/>
            <person name="Larimer F."/>
            <person name="Land M."/>
            <person name="Hauser L."/>
            <person name="Kyrpides N."/>
            <person name="Anderson I.J."/>
            <person name="Miller C."/>
            <person name="Richardson P."/>
        </authorList>
    </citation>
    <scope>NUCLEOTIDE SEQUENCE [LARGE SCALE GENOMIC DNA]</scope>
    <source>
        <strain>DSM 7251 / JCM 13017 / BCRC 16820 / KCTC 9966 / NRRL B-24157 / PYR-1</strain>
    </source>
</reference>
<accession>A1TB00</accession>
<protein>
    <recommendedName>
        <fullName evidence="1">Anthranilate phosphoribosyltransferase</fullName>
        <ecNumber evidence="1">2.4.2.18</ecNumber>
    </recommendedName>
</protein>
<proteinExistence type="inferred from homology"/>
<keyword id="KW-0028">Amino-acid biosynthesis</keyword>
<keyword id="KW-0057">Aromatic amino acid biosynthesis</keyword>
<keyword id="KW-0328">Glycosyltransferase</keyword>
<keyword id="KW-0460">Magnesium</keyword>
<keyword id="KW-0479">Metal-binding</keyword>
<keyword id="KW-0808">Transferase</keyword>
<keyword id="KW-0822">Tryptophan biosynthesis</keyword>
<dbReference type="EC" id="2.4.2.18" evidence="1"/>
<dbReference type="EMBL" id="CP000511">
    <property type="protein sequence ID" value="ABM14350.1"/>
    <property type="molecule type" value="Genomic_DNA"/>
</dbReference>
<dbReference type="SMR" id="A1TB00"/>
<dbReference type="STRING" id="350058.Mvan_3556"/>
<dbReference type="KEGG" id="mva:Mvan_3556"/>
<dbReference type="eggNOG" id="COG0547">
    <property type="taxonomic scope" value="Bacteria"/>
</dbReference>
<dbReference type="HOGENOM" id="CLU_034315_4_1_11"/>
<dbReference type="UniPathway" id="UPA00035">
    <property type="reaction ID" value="UER00041"/>
</dbReference>
<dbReference type="Proteomes" id="UP000009159">
    <property type="component" value="Chromosome"/>
</dbReference>
<dbReference type="GO" id="GO:0005829">
    <property type="term" value="C:cytosol"/>
    <property type="evidence" value="ECO:0007669"/>
    <property type="project" value="TreeGrafter"/>
</dbReference>
<dbReference type="GO" id="GO:0004048">
    <property type="term" value="F:anthranilate phosphoribosyltransferase activity"/>
    <property type="evidence" value="ECO:0007669"/>
    <property type="project" value="UniProtKB-UniRule"/>
</dbReference>
<dbReference type="GO" id="GO:0000287">
    <property type="term" value="F:magnesium ion binding"/>
    <property type="evidence" value="ECO:0007669"/>
    <property type="project" value="UniProtKB-UniRule"/>
</dbReference>
<dbReference type="GO" id="GO:0000162">
    <property type="term" value="P:L-tryptophan biosynthetic process"/>
    <property type="evidence" value="ECO:0007669"/>
    <property type="project" value="UniProtKB-UniRule"/>
</dbReference>
<dbReference type="FunFam" id="3.40.1030.10:FF:000002">
    <property type="entry name" value="Anthranilate phosphoribosyltransferase"/>
    <property type="match status" value="1"/>
</dbReference>
<dbReference type="Gene3D" id="3.40.1030.10">
    <property type="entry name" value="Nucleoside phosphorylase/phosphoribosyltransferase catalytic domain"/>
    <property type="match status" value="1"/>
</dbReference>
<dbReference type="Gene3D" id="1.20.970.10">
    <property type="entry name" value="Transferase, Pyrimidine Nucleoside Phosphorylase, Chain C"/>
    <property type="match status" value="1"/>
</dbReference>
<dbReference type="HAMAP" id="MF_00211">
    <property type="entry name" value="TrpD"/>
    <property type="match status" value="1"/>
</dbReference>
<dbReference type="InterPro" id="IPR005940">
    <property type="entry name" value="Anthranilate_Pribosyl_Tfrase"/>
</dbReference>
<dbReference type="InterPro" id="IPR000312">
    <property type="entry name" value="Glycosyl_Trfase_fam3"/>
</dbReference>
<dbReference type="InterPro" id="IPR017459">
    <property type="entry name" value="Glycosyl_Trfase_fam3_N_dom"/>
</dbReference>
<dbReference type="InterPro" id="IPR036320">
    <property type="entry name" value="Glycosyl_Trfase_fam3_N_dom_sf"/>
</dbReference>
<dbReference type="InterPro" id="IPR035902">
    <property type="entry name" value="Nuc_phospho_transferase"/>
</dbReference>
<dbReference type="NCBIfam" id="TIGR01245">
    <property type="entry name" value="trpD"/>
    <property type="match status" value="1"/>
</dbReference>
<dbReference type="PANTHER" id="PTHR43285">
    <property type="entry name" value="ANTHRANILATE PHOSPHORIBOSYLTRANSFERASE"/>
    <property type="match status" value="1"/>
</dbReference>
<dbReference type="PANTHER" id="PTHR43285:SF2">
    <property type="entry name" value="ANTHRANILATE PHOSPHORIBOSYLTRANSFERASE"/>
    <property type="match status" value="1"/>
</dbReference>
<dbReference type="Pfam" id="PF02885">
    <property type="entry name" value="Glycos_trans_3N"/>
    <property type="match status" value="1"/>
</dbReference>
<dbReference type="Pfam" id="PF00591">
    <property type="entry name" value="Glycos_transf_3"/>
    <property type="match status" value="1"/>
</dbReference>
<dbReference type="SUPFAM" id="SSF52418">
    <property type="entry name" value="Nucleoside phosphorylase/phosphoribosyltransferase catalytic domain"/>
    <property type="match status" value="1"/>
</dbReference>
<dbReference type="SUPFAM" id="SSF47648">
    <property type="entry name" value="Nucleoside phosphorylase/phosphoribosyltransferase N-terminal domain"/>
    <property type="match status" value="1"/>
</dbReference>
<gene>
    <name evidence="1" type="primary">trpD</name>
    <name type="ordered locus">Mvan_3556</name>
</gene>
<name>TRPD_MYCVP</name>